<gene>
    <name evidence="1" type="primary">mdoB</name>
    <name evidence="1" type="synonym">opgB</name>
    <name type="ordered locus">ECED1_5227</name>
</gene>
<protein>
    <recommendedName>
        <fullName evidence="1">Phosphoglycerol transferase I</fullName>
        <ecNumber evidence="1">2.7.8.20</ecNumber>
    </recommendedName>
    <alternativeName>
        <fullName evidence="1">Phosphatidylglycerol--membrane-oligosaccharide glycerophosphotransferase</fullName>
    </alternativeName>
</protein>
<keyword id="KW-0997">Cell inner membrane</keyword>
<keyword id="KW-1003">Cell membrane</keyword>
<keyword id="KW-0472">Membrane</keyword>
<keyword id="KW-0808">Transferase</keyword>
<keyword id="KW-0812">Transmembrane</keyword>
<keyword id="KW-1133">Transmembrane helix</keyword>
<evidence type="ECO:0000255" key="1">
    <source>
        <dbReference type="HAMAP-Rule" id="MF_01070"/>
    </source>
</evidence>
<feature type="chain" id="PRO_1000149752" description="Phosphoglycerol transferase I">
    <location>
        <begin position="1"/>
        <end position="763"/>
    </location>
</feature>
<feature type="transmembrane region" description="Helical" evidence="1">
    <location>
        <begin position="1"/>
        <end position="21"/>
    </location>
</feature>
<feature type="transmembrane region" description="Helical" evidence="1">
    <location>
        <begin position="26"/>
        <end position="46"/>
    </location>
</feature>
<feature type="transmembrane region" description="Helical" evidence="1">
    <location>
        <begin position="77"/>
        <end position="97"/>
    </location>
</feature>
<feature type="transmembrane region" description="Helical" evidence="1">
    <location>
        <begin position="108"/>
        <end position="128"/>
    </location>
</feature>
<sequence length="763" mass="85474">MSELLSFALFLASVLIYAWKAGRNTWWFAATLTVLGLFVVLNITLFASDYFTGDGINDAVLYTLTNSLTGAGVSKYILPGIGIVLGLAAVFGALGWILRRRRHHPHHFGYSLLALLLALGSVDASPAFRQITELVKSQSRDGDPDFAAYYKEPSRTIPDPKLNLVYIYGESLERTYFDNEAFPDLTPELGALKNEGLDFSHTQQLPGTDYTIAGMVASQCGIPLFAPFEGNASASVSSFFPQNICLGDILKNSGYQNYFVQGANLRFAGKDVFLKSHGFDHLYGSEELKSVVADPHYRNDWGFYDDTVLDEAWKKFEELSRSGQRFSLFTLTVDTHHPDGFISRTCNRKKYDFDGKPNQSFSAVSCSQENIATFINKIKASPWFKDTVIVVSSDHLAMNNTAWKYLNKQDRNNLFFVIRGDKPQQETLAVKRNTMDNGATVLDILGGDNYLGLGRSSLSGQSMSEIFLNIKEKTLAWKPDIIRLWKFPKEMKEFTIDQQKNMIAFSGSHFRLPLLLRVSDKRVEPLPESEYSAPLRFQLADFAPRDNFVWVDRCYKMAQLWAPELALSTDWCVSQGQLGGQQIVQHVDKAIWKGKTAFKDTVIDMARYKGNVDTLKIVDNDIRYKADSFIFNVAGAPEEVKQFSGISRPESWGRWSNAQLGDEVKIEYKHPLPKKFDLVITAKAYGNNASRPIPVRVGNEEQTLVLGNEVTTTTLHFDNPTDADTLVIVPPEPVSTNEGNILGHSPRKLGIGMVEIKVVEREG</sequence>
<proteinExistence type="inferred from homology"/>
<dbReference type="EC" id="2.7.8.20" evidence="1"/>
<dbReference type="EMBL" id="CU928162">
    <property type="protein sequence ID" value="CAV18189.1"/>
    <property type="molecule type" value="Genomic_DNA"/>
</dbReference>
<dbReference type="RefSeq" id="WP_001292634.1">
    <property type="nucleotide sequence ID" value="NC_011745.1"/>
</dbReference>
<dbReference type="SMR" id="B7N380"/>
<dbReference type="KEGG" id="ecq:ECED1_5227"/>
<dbReference type="HOGENOM" id="CLU_023986_1_0_6"/>
<dbReference type="UniPathway" id="UPA00637"/>
<dbReference type="Proteomes" id="UP000000748">
    <property type="component" value="Chromosome"/>
</dbReference>
<dbReference type="GO" id="GO:0005886">
    <property type="term" value="C:plasma membrane"/>
    <property type="evidence" value="ECO:0007669"/>
    <property type="project" value="UniProtKB-SubCell"/>
</dbReference>
<dbReference type="GO" id="GO:0008960">
    <property type="term" value="F:phosphatidylglycerol-membrane-oligosaccharide glycerophosphotransferase activity"/>
    <property type="evidence" value="ECO:0007669"/>
    <property type="project" value="UniProtKB-UniRule"/>
</dbReference>
<dbReference type="GO" id="GO:0009250">
    <property type="term" value="P:glucan biosynthetic process"/>
    <property type="evidence" value="ECO:0007669"/>
    <property type="project" value="UniProtKB-UniRule"/>
</dbReference>
<dbReference type="CDD" id="cd16015">
    <property type="entry name" value="LTA_synthase"/>
    <property type="match status" value="1"/>
</dbReference>
<dbReference type="FunFam" id="3.40.720.10:FF:000009">
    <property type="entry name" value="Phosphoglycerol transferase I"/>
    <property type="match status" value="1"/>
</dbReference>
<dbReference type="Gene3D" id="3.40.720.10">
    <property type="entry name" value="Alkaline Phosphatase, subunit A"/>
    <property type="match status" value="1"/>
</dbReference>
<dbReference type="HAMAP" id="MF_01070">
    <property type="entry name" value="MdoB_OpgB"/>
    <property type="match status" value="1"/>
</dbReference>
<dbReference type="InterPro" id="IPR017850">
    <property type="entry name" value="Alkaline_phosphatase_core_sf"/>
</dbReference>
<dbReference type="InterPro" id="IPR054288">
    <property type="entry name" value="DUF7024"/>
</dbReference>
<dbReference type="InterPro" id="IPR020881">
    <property type="entry name" value="OpgB"/>
</dbReference>
<dbReference type="InterPro" id="IPR050448">
    <property type="entry name" value="OpgB/LTA_synthase_biosynth"/>
</dbReference>
<dbReference type="InterPro" id="IPR000917">
    <property type="entry name" value="Sulfatase_N"/>
</dbReference>
<dbReference type="NCBIfam" id="NF003000">
    <property type="entry name" value="PRK03776.1"/>
    <property type="match status" value="1"/>
</dbReference>
<dbReference type="PANTHER" id="PTHR47371">
    <property type="entry name" value="LIPOTEICHOIC ACID SYNTHASE"/>
    <property type="match status" value="1"/>
</dbReference>
<dbReference type="PANTHER" id="PTHR47371:SF3">
    <property type="entry name" value="PHOSPHOGLYCEROL TRANSFERASE I"/>
    <property type="match status" value="1"/>
</dbReference>
<dbReference type="Pfam" id="PF22895">
    <property type="entry name" value="DUF7024"/>
    <property type="match status" value="1"/>
</dbReference>
<dbReference type="Pfam" id="PF00884">
    <property type="entry name" value="Sulfatase"/>
    <property type="match status" value="1"/>
</dbReference>
<dbReference type="SUPFAM" id="SSF53649">
    <property type="entry name" value="Alkaline phosphatase-like"/>
    <property type="match status" value="1"/>
</dbReference>
<comment type="function">
    <text evidence="1">Transfers a phosphoglycerol residue from phosphatidylglycerol to the membrane-bound nascent glucan backbones.</text>
</comment>
<comment type="catalytic activity">
    <reaction evidence="1">
        <text>a phosphatidylglycerol + a membrane-derived-oligosaccharide D-glucose = a 1,2-diacyl-sn-glycerol + a membrane-derived-oligosaccharide 6-(glycerophospho)-D-glucose.</text>
        <dbReference type="EC" id="2.7.8.20"/>
    </reaction>
</comment>
<comment type="pathway">
    <text evidence="1">Glycan metabolism; osmoregulated periplasmic glucan (OPG) biosynthesis.</text>
</comment>
<comment type="subcellular location">
    <subcellularLocation>
        <location evidence="1">Cell inner membrane</location>
        <topology evidence="1">Multi-pass membrane protein</topology>
    </subcellularLocation>
</comment>
<comment type="similarity">
    <text evidence="1">Belongs to the OpgB family.</text>
</comment>
<organism>
    <name type="scientific">Escherichia coli O81 (strain ED1a)</name>
    <dbReference type="NCBI Taxonomy" id="585397"/>
    <lineage>
        <taxon>Bacteria</taxon>
        <taxon>Pseudomonadati</taxon>
        <taxon>Pseudomonadota</taxon>
        <taxon>Gammaproteobacteria</taxon>
        <taxon>Enterobacterales</taxon>
        <taxon>Enterobacteriaceae</taxon>
        <taxon>Escherichia</taxon>
    </lineage>
</organism>
<name>OPGB_ECO81</name>
<accession>B7N380</accession>
<reference key="1">
    <citation type="journal article" date="2009" name="PLoS Genet.">
        <title>Organised genome dynamics in the Escherichia coli species results in highly diverse adaptive paths.</title>
        <authorList>
            <person name="Touchon M."/>
            <person name="Hoede C."/>
            <person name="Tenaillon O."/>
            <person name="Barbe V."/>
            <person name="Baeriswyl S."/>
            <person name="Bidet P."/>
            <person name="Bingen E."/>
            <person name="Bonacorsi S."/>
            <person name="Bouchier C."/>
            <person name="Bouvet O."/>
            <person name="Calteau A."/>
            <person name="Chiapello H."/>
            <person name="Clermont O."/>
            <person name="Cruveiller S."/>
            <person name="Danchin A."/>
            <person name="Diard M."/>
            <person name="Dossat C."/>
            <person name="Karoui M.E."/>
            <person name="Frapy E."/>
            <person name="Garry L."/>
            <person name="Ghigo J.M."/>
            <person name="Gilles A.M."/>
            <person name="Johnson J."/>
            <person name="Le Bouguenec C."/>
            <person name="Lescat M."/>
            <person name="Mangenot S."/>
            <person name="Martinez-Jehanne V."/>
            <person name="Matic I."/>
            <person name="Nassif X."/>
            <person name="Oztas S."/>
            <person name="Petit M.A."/>
            <person name="Pichon C."/>
            <person name="Rouy Z."/>
            <person name="Ruf C.S."/>
            <person name="Schneider D."/>
            <person name="Tourret J."/>
            <person name="Vacherie B."/>
            <person name="Vallenet D."/>
            <person name="Medigue C."/>
            <person name="Rocha E.P.C."/>
            <person name="Denamur E."/>
        </authorList>
    </citation>
    <scope>NUCLEOTIDE SEQUENCE [LARGE SCALE GENOMIC DNA]</scope>
    <source>
        <strain>ED1a</strain>
    </source>
</reference>